<dbReference type="EMBL" id="AF154851">
    <property type="protein sequence ID" value="AAD41389.1"/>
    <property type="molecule type" value="Genomic_DNA"/>
</dbReference>
<dbReference type="RefSeq" id="NP_008677.1">
    <property type="nucleotide sequence ID" value="NC_000861.1"/>
</dbReference>
<dbReference type="SMR" id="Q9XN27"/>
<dbReference type="GeneID" id="808552"/>
<dbReference type="KEGG" id="salp:808552"/>
<dbReference type="CTD" id="4509"/>
<dbReference type="OrthoDB" id="350812at7898"/>
<dbReference type="GO" id="GO:0031966">
    <property type="term" value="C:mitochondrial membrane"/>
    <property type="evidence" value="ECO:0007669"/>
    <property type="project" value="UniProtKB-SubCell"/>
</dbReference>
<dbReference type="GO" id="GO:0045259">
    <property type="term" value="C:proton-transporting ATP synthase complex"/>
    <property type="evidence" value="ECO:0007669"/>
    <property type="project" value="UniProtKB-KW"/>
</dbReference>
<dbReference type="GO" id="GO:0015078">
    <property type="term" value="F:proton transmembrane transporter activity"/>
    <property type="evidence" value="ECO:0007669"/>
    <property type="project" value="InterPro"/>
</dbReference>
<dbReference type="GO" id="GO:0015986">
    <property type="term" value="P:proton motive force-driven ATP synthesis"/>
    <property type="evidence" value="ECO:0007669"/>
    <property type="project" value="InterPro"/>
</dbReference>
<dbReference type="InterPro" id="IPR001421">
    <property type="entry name" value="ATP8_metazoa"/>
</dbReference>
<dbReference type="InterPro" id="IPR050635">
    <property type="entry name" value="ATPase_protein_8"/>
</dbReference>
<dbReference type="PANTHER" id="PTHR39937">
    <property type="entry name" value="ATP SYNTHASE PROTEIN 8"/>
    <property type="match status" value="1"/>
</dbReference>
<dbReference type="PANTHER" id="PTHR39937:SF1">
    <property type="entry name" value="ATP SYNTHASE PROTEIN 8"/>
    <property type="match status" value="1"/>
</dbReference>
<dbReference type="Pfam" id="PF00895">
    <property type="entry name" value="ATP-synt_8"/>
    <property type="match status" value="1"/>
</dbReference>
<name>ATP8_SALAL</name>
<gene>
    <name evidence="1" type="primary">mt-atp8</name>
    <name type="synonym">atp8</name>
    <name type="synonym">atpase8</name>
    <name type="synonym">mtatp8</name>
</gene>
<accession>Q9XN27</accession>
<organism>
    <name type="scientific">Salvelinus alpinus</name>
    <name type="common">Arctic char</name>
    <name type="synonym">Salmo alpinus</name>
    <dbReference type="NCBI Taxonomy" id="8036"/>
    <lineage>
        <taxon>Eukaryota</taxon>
        <taxon>Metazoa</taxon>
        <taxon>Chordata</taxon>
        <taxon>Craniata</taxon>
        <taxon>Vertebrata</taxon>
        <taxon>Euteleostomi</taxon>
        <taxon>Actinopterygii</taxon>
        <taxon>Neopterygii</taxon>
        <taxon>Teleostei</taxon>
        <taxon>Protacanthopterygii</taxon>
        <taxon>Salmoniformes</taxon>
        <taxon>Salmonidae</taxon>
        <taxon>Salmoninae</taxon>
        <taxon>Salvelinus</taxon>
    </lineage>
</organism>
<evidence type="ECO:0000250" key="1">
    <source>
        <dbReference type="UniProtKB" id="P03928"/>
    </source>
</evidence>
<evidence type="ECO:0000250" key="2">
    <source>
        <dbReference type="UniProtKB" id="P19483"/>
    </source>
</evidence>
<evidence type="ECO:0000255" key="3"/>
<evidence type="ECO:0000256" key="4">
    <source>
        <dbReference type="SAM" id="MobiDB-lite"/>
    </source>
</evidence>
<evidence type="ECO:0000305" key="5"/>
<protein>
    <recommendedName>
        <fullName evidence="1">ATP synthase F(0) complex subunit 8</fullName>
    </recommendedName>
    <alternativeName>
        <fullName>A6L</fullName>
    </alternativeName>
    <alternativeName>
        <fullName>F-ATPase subunit 8</fullName>
    </alternativeName>
</protein>
<keyword id="KW-0066">ATP synthesis</keyword>
<keyword id="KW-0138">CF(0)</keyword>
<keyword id="KW-0375">Hydrogen ion transport</keyword>
<keyword id="KW-0406">Ion transport</keyword>
<keyword id="KW-0472">Membrane</keyword>
<keyword id="KW-0496">Mitochondrion</keyword>
<keyword id="KW-0812">Transmembrane</keyword>
<keyword id="KW-1133">Transmembrane helix</keyword>
<keyword id="KW-0813">Transport</keyword>
<feature type="chain" id="PRO_0000195582" description="ATP synthase F(0) complex subunit 8">
    <location>
        <begin position="1"/>
        <end position="55"/>
    </location>
</feature>
<feature type="transmembrane region" description="Helical" evidence="3">
    <location>
        <begin position="4"/>
        <end position="24"/>
    </location>
</feature>
<feature type="region of interest" description="Disordered" evidence="4">
    <location>
        <begin position="36"/>
        <end position="55"/>
    </location>
</feature>
<proteinExistence type="inferred from homology"/>
<sequence>MPQLNPAPWFAILVFSWLVFLTVIPPKVLGHIFTNEPTSQSTEKTKPEPWNWPWH</sequence>
<geneLocation type="mitochondrion"/>
<reference key="1">
    <citation type="submission" date="1999-05" db="EMBL/GenBank/DDBJ databases">
        <title>A comparative analysis of complete sequence of mitochondrial genome between brook char (Salvelinus fontinalis) and arctic char (S. alpinus).</title>
        <authorList>
            <person name="Doiron S."/>
            <person name="Blier P.U."/>
            <person name="Bernatchez L."/>
        </authorList>
    </citation>
    <scope>NUCLEOTIDE SEQUENCE [GENOMIC DNA]</scope>
</reference>
<comment type="function">
    <text evidence="1 2">Subunit 8, of the mitochondrial membrane ATP synthase complex (F(1)F(0) ATP synthase or Complex V) that produces ATP from ADP in the presence of a proton gradient across the membrane which is generated by electron transport complexes of the respiratory chain. ATP synthase complex consist of a soluble F(1) head domain - the catalytic core - and a membrane F(1) domain - the membrane proton channel. These two domains are linked by a central stalk rotating inside the F(1) region and a stationary peripheral stalk. During catalysis, ATP synthesis in the catalytic domain of F(1) is coupled via a rotary mechanism of the central stalk subunits to proton translocation (By similarity). In vivo, can only synthesize ATP although its ATP hydrolase activity can be activated artificially in vitro (By similarity). Part of the complex F(0) domain (By similarity).</text>
</comment>
<comment type="subunit">
    <text evidence="1">Component of the ATP synthase complex composed at least of ATP5F1A/subunit alpha, ATP5F1B/subunit beta, ATP5MC1/subunit c (homooctomer), MT-ATP6/subunit a, MT-ATP8/subunit 8, ATP5ME/subunit e, ATP5MF/subunit f, ATP5MG/subunit g, ATP5MK/subunit k, ATP5MJ/subunit j, ATP5F1C/subunit gamma, ATP5F1D/subunit delta, ATP5F1E/subunit epsilon, ATP5PF/subunit F6, ATP5PB/subunit b, ATP5PD/subunit d, ATP5PO/subunit OSCP. ATP synthase complex consists of a soluble F(1) head domain (subunits alpha(3) and beta(3)) - the catalytic core - and a membrane F(0) domain - the membrane proton channel (subunits c, a, 8, e, f, g, k and j). These two domains are linked by a central stalk (subunits gamma, delta, and epsilon) rotating inside the F1 region and a stationary peripheral stalk (subunits F6, b, d, and OSCP).</text>
</comment>
<comment type="subcellular location">
    <subcellularLocation>
        <location>Mitochondrion membrane</location>
        <topology>Single-pass membrane protein</topology>
    </subcellularLocation>
</comment>
<comment type="similarity">
    <text evidence="5">Belongs to the ATPase protein 8 family.</text>
</comment>